<evidence type="ECO:0000255" key="1">
    <source>
        <dbReference type="HAMAP-Rule" id="MF_00181"/>
    </source>
</evidence>
<protein>
    <recommendedName>
        <fullName evidence="1">Probable cytosol aminopeptidase</fullName>
        <ecNumber evidence="1">3.4.11.1</ecNumber>
    </recommendedName>
    <alternativeName>
        <fullName evidence="1">Leucine aminopeptidase</fullName>
        <shortName evidence="1">LAP</shortName>
        <ecNumber evidence="1">3.4.11.10</ecNumber>
    </alternativeName>
    <alternativeName>
        <fullName evidence="1">Leucyl aminopeptidase</fullName>
    </alternativeName>
</protein>
<organism>
    <name type="scientific">Chlorobium limicola (strain DSM 245 / NBRC 103803 / 6330)</name>
    <dbReference type="NCBI Taxonomy" id="290315"/>
    <lineage>
        <taxon>Bacteria</taxon>
        <taxon>Pseudomonadati</taxon>
        <taxon>Chlorobiota</taxon>
        <taxon>Chlorobiia</taxon>
        <taxon>Chlorobiales</taxon>
        <taxon>Chlorobiaceae</taxon>
        <taxon>Chlorobium/Pelodictyon group</taxon>
        <taxon>Chlorobium</taxon>
    </lineage>
</organism>
<dbReference type="EC" id="3.4.11.1" evidence="1"/>
<dbReference type="EC" id="3.4.11.10" evidence="1"/>
<dbReference type="EMBL" id="CP001097">
    <property type="protein sequence ID" value="ACD90471.1"/>
    <property type="molecule type" value="Genomic_DNA"/>
</dbReference>
<dbReference type="RefSeq" id="WP_012466348.1">
    <property type="nucleotide sequence ID" value="NC_010803.1"/>
</dbReference>
<dbReference type="SMR" id="B3ED46"/>
<dbReference type="STRING" id="290315.Clim_1411"/>
<dbReference type="KEGG" id="cli:Clim_1411"/>
<dbReference type="eggNOG" id="COG0260">
    <property type="taxonomic scope" value="Bacteria"/>
</dbReference>
<dbReference type="HOGENOM" id="CLU_013734_2_2_10"/>
<dbReference type="OrthoDB" id="9809354at2"/>
<dbReference type="Proteomes" id="UP000008841">
    <property type="component" value="Chromosome"/>
</dbReference>
<dbReference type="GO" id="GO:0005737">
    <property type="term" value="C:cytoplasm"/>
    <property type="evidence" value="ECO:0007669"/>
    <property type="project" value="UniProtKB-SubCell"/>
</dbReference>
<dbReference type="GO" id="GO:0030145">
    <property type="term" value="F:manganese ion binding"/>
    <property type="evidence" value="ECO:0007669"/>
    <property type="project" value="UniProtKB-UniRule"/>
</dbReference>
<dbReference type="GO" id="GO:0070006">
    <property type="term" value="F:metalloaminopeptidase activity"/>
    <property type="evidence" value="ECO:0007669"/>
    <property type="project" value="InterPro"/>
</dbReference>
<dbReference type="GO" id="GO:0006508">
    <property type="term" value="P:proteolysis"/>
    <property type="evidence" value="ECO:0007669"/>
    <property type="project" value="UniProtKB-KW"/>
</dbReference>
<dbReference type="CDD" id="cd00433">
    <property type="entry name" value="Peptidase_M17"/>
    <property type="match status" value="1"/>
</dbReference>
<dbReference type="Gene3D" id="3.40.220.10">
    <property type="entry name" value="Leucine Aminopeptidase, subunit E, domain 1"/>
    <property type="match status" value="1"/>
</dbReference>
<dbReference type="Gene3D" id="3.40.630.10">
    <property type="entry name" value="Zn peptidases"/>
    <property type="match status" value="1"/>
</dbReference>
<dbReference type="HAMAP" id="MF_00181">
    <property type="entry name" value="Cytosol_peptidase_M17"/>
    <property type="match status" value="1"/>
</dbReference>
<dbReference type="InterPro" id="IPR011356">
    <property type="entry name" value="Leucine_aapep/pepB"/>
</dbReference>
<dbReference type="InterPro" id="IPR043472">
    <property type="entry name" value="Macro_dom-like"/>
</dbReference>
<dbReference type="InterPro" id="IPR000819">
    <property type="entry name" value="Peptidase_M17_C"/>
</dbReference>
<dbReference type="InterPro" id="IPR023042">
    <property type="entry name" value="Peptidase_M17_leu_NH2_pept"/>
</dbReference>
<dbReference type="InterPro" id="IPR008283">
    <property type="entry name" value="Peptidase_M17_N"/>
</dbReference>
<dbReference type="NCBIfam" id="NF002073">
    <property type="entry name" value="PRK00913.1-2"/>
    <property type="match status" value="1"/>
</dbReference>
<dbReference type="NCBIfam" id="NF002074">
    <property type="entry name" value="PRK00913.1-4"/>
    <property type="match status" value="1"/>
</dbReference>
<dbReference type="NCBIfam" id="NF002082">
    <property type="entry name" value="PRK00913.3-4"/>
    <property type="match status" value="1"/>
</dbReference>
<dbReference type="NCBIfam" id="NF002083">
    <property type="entry name" value="PRK00913.3-5"/>
    <property type="match status" value="1"/>
</dbReference>
<dbReference type="PANTHER" id="PTHR11963:SF23">
    <property type="entry name" value="CYTOSOL AMINOPEPTIDASE"/>
    <property type="match status" value="1"/>
</dbReference>
<dbReference type="PANTHER" id="PTHR11963">
    <property type="entry name" value="LEUCINE AMINOPEPTIDASE-RELATED"/>
    <property type="match status" value="1"/>
</dbReference>
<dbReference type="Pfam" id="PF00883">
    <property type="entry name" value="Peptidase_M17"/>
    <property type="match status" value="1"/>
</dbReference>
<dbReference type="Pfam" id="PF02789">
    <property type="entry name" value="Peptidase_M17_N"/>
    <property type="match status" value="1"/>
</dbReference>
<dbReference type="PRINTS" id="PR00481">
    <property type="entry name" value="LAMNOPPTDASE"/>
</dbReference>
<dbReference type="SUPFAM" id="SSF52949">
    <property type="entry name" value="Macro domain-like"/>
    <property type="match status" value="1"/>
</dbReference>
<dbReference type="SUPFAM" id="SSF53187">
    <property type="entry name" value="Zn-dependent exopeptidases"/>
    <property type="match status" value="1"/>
</dbReference>
<dbReference type="PROSITE" id="PS00631">
    <property type="entry name" value="CYTOSOL_AP"/>
    <property type="match status" value="1"/>
</dbReference>
<reference key="1">
    <citation type="submission" date="2008-05" db="EMBL/GenBank/DDBJ databases">
        <title>Complete sequence of Chlorobium limicola DSM 245.</title>
        <authorList>
            <consortium name="US DOE Joint Genome Institute"/>
            <person name="Lucas S."/>
            <person name="Copeland A."/>
            <person name="Lapidus A."/>
            <person name="Glavina del Rio T."/>
            <person name="Dalin E."/>
            <person name="Tice H."/>
            <person name="Bruce D."/>
            <person name="Goodwin L."/>
            <person name="Pitluck S."/>
            <person name="Schmutz J."/>
            <person name="Larimer F."/>
            <person name="Land M."/>
            <person name="Hauser L."/>
            <person name="Kyrpides N."/>
            <person name="Ovchinnikova G."/>
            <person name="Zhao F."/>
            <person name="Li T."/>
            <person name="Liu Z."/>
            <person name="Overmann J."/>
            <person name="Bryant D.A."/>
            <person name="Richardson P."/>
        </authorList>
    </citation>
    <scope>NUCLEOTIDE SEQUENCE [LARGE SCALE GENOMIC DNA]</scope>
    <source>
        <strain>DSM 245 / NBRC 103803 / 6330</strain>
    </source>
</reference>
<gene>
    <name evidence="1" type="primary">pepA</name>
    <name type="ordered locus">Clim_1411</name>
</gene>
<sequence>MNISVTATPVKKIKTELLVVPFTTGALKKNADGILQDLGYDAVVLRDFKADAGELVILYGAAGKAIAARAALLGMGEGKKVTDFRKAAAALALKAMDMKIESVAVDFSGVKGFASSAKSSVASICSAFIEGCYTGSYRFDRLKSDKLKKKKDESDKTKEISELVLRAEPAQLSAVEDGLAAGIITGSCQNMARDLVNLPGNLLQAEDISAAAVESGKRCGFEVNVFGKEEIEALGMGGLLAVNRGSQHPPTFTVLDYKPEGKVAKTVALVGKGVTFDSGGISLKPSEGMGEMKSDMSGAASVIGAVEAVARLGLPIRVIGLIPATDNMPSGSATKPGDVITTYSGITVEVGNTDAEGRLILADALTYAKKQYNPDVIIDLATLTGACIVALGYTVAGLFSNDDRLADDIFEAGQITGEKVWRMPLWEEYDEMIKSDVADVSNLGARGAGSVTASRFLEKFIDGHKKWAHIDIAGPSFSAKGAKVSGATGFGVRLLVELLKKWS</sequence>
<proteinExistence type="inferred from homology"/>
<feature type="chain" id="PRO_1000098313" description="Probable cytosol aminopeptidase">
    <location>
        <begin position="1"/>
        <end position="503"/>
    </location>
</feature>
<feature type="active site" evidence="1">
    <location>
        <position position="284"/>
    </location>
</feature>
<feature type="active site" evidence="1">
    <location>
        <position position="358"/>
    </location>
</feature>
<feature type="binding site" evidence="1">
    <location>
        <position position="272"/>
    </location>
    <ligand>
        <name>Mn(2+)</name>
        <dbReference type="ChEBI" id="CHEBI:29035"/>
        <label>2</label>
    </ligand>
</feature>
<feature type="binding site" evidence="1">
    <location>
        <position position="277"/>
    </location>
    <ligand>
        <name>Mn(2+)</name>
        <dbReference type="ChEBI" id="CHEBI:29035"/>
        <label>1</label>
    </ligand>
</feature>
<feature type="binding site" evidence="1">
    <location>
        <position position="277"/>
    </location>
    <ligand>
        <name>Mn(2+)</name>
        <dbReference type="ChEBI" id="CHEBI:29035"/>
        <label>2</label>
    </ligand>
</feature>
<feature type="binding site" evidence="1">
    <location>
        <position position="295"/>
    </location>
    <ligand>
        <name>Mn(2+)</name>
        <dbReference type="ChEBI" id="CHEBI:29035"/>
        <label>2</label>
    </ligand>
</feature>
<feature type="binding site" evidence="1">
    <location>
        <position position="354"/>
    </location>
    <ligand>
        <name>Mn(2+)</name>
        <dbReference type="ChEBI" id="CHEBI:29035"/>
        <label>1</label>
    </ligand>
</feature>
<feature type="binding site" evidence="1">
    <location>
        <position position="356"/>
    </location>
    <ligand>
        <name>Mn(2+)</name>
        <dbReference type="ChEBI" id="CHEBI:29035"/>
        <label>1</label>
    </ligand>
</feature>
<feature type="binding site" evidence="1">
    <location>
        <position position="356"/>
    </location>
    <ligand>
        <name>Mn(2+)</name>
        <dbReference type="ChEBI" id="CHEBI:29035"/>
        <label>2</label>
    </ligand>
</feature>
<name>AMPA_CHLL2</name>
<comment type="function">
    <text evidence="1">Presumably involved in the processing and regular turnover of intracellular proteins. Catalyzes the removal of unsubstituted N-terminal amino acids from various peptides.</text>
</comment>
<comment type="catalytic activity">
    <reaction evidence="1">
        <text>Release of an N-terminal amino acid, Xaa-|-Yaa-, in which Xaa is preferably Leu, but may be other amino acids including Pro although not Arg or Lys, and Yaa may be Pro. Amino acid amides and methyl esters are also readily hydrolyzed, but rates on arylamides are exceedingly low.</text>
        <dbReference type="EC" id="3.4.11.1"/>
    </reaction>
</comment>
<comment type="catalytic activity">
    <reaction evidence="1">
        <text>Release of an N-terminal amino acid, preferentially leucine, but not glutamic or aspartic acids.</text>
        <dbReference type="EC" id="3.4.11.10"/>
    </reaction>
</comment>
<comment type="cofactor">
    <cofactor evidence="1">
        <name>Mn(2+)</name>
        <dbReference type="ChEBI" id="CHEBI:29035"/>
    </cofactor>
    <text evidence="1">Binds 2 manganese ions per subunit.</text>
</comment>
<comment type="subcellular location">
    <subcellularLocation>
        <location evidence="1">Cytoplasm</location>
    </subcellularLocation>
</comment>
<comment type="similarity">
    <text evidence="1">Belongs to the peptidase M17 family.</text>
</comment>
<accession>B3ED46</accession>
<keyword id="KW-0031">Aminopeptidase</keyword>
<keyword id="KW-0963">Cytoplasm</keyword>
<keyword id="KW-0378">Hydrolase</keyword>
<keyword id="KW-0464">Manganese</keyword>
<keyword id="KW-0479">Metal-binding</keyword>
<keyword id="KW-0645">Protease</keyword>